<gene>
    <name evidence="1" type="primary">surE</name>
    <name type="ordered locus">Rleg2_1491</name>
</gene>
<dbReference type="EC" id="3.1.3.5" evidence="1"/>
<dbReference type="EMBL" id="CP001191">
    <property type="protein sequence ID" value="ACI54783.1"/>
    <property type="molecule type" value="Genomic_DNA"/>
</dbReference>
<dbReference type="RefSeq" id="WP_003586945.1">
    <property type="nucleotide sequence ID" value="NC_011369.1"/>
</dbReference>
<dbReference type="SMR" id="B5ZMG1"/>
<dbReference type="STRING" id="395492.Rleg2_1491"/>
<dbReference type="KEGG" id="rlt:Rleg2_1491"/>
<dbReference type="eggNOG" id="COG0496">
    <property type="taxonomic scope" value="Bacteria"/>
</dbReference>
<dbReference type="HOGENOM" id="CLU_045192_1_2_5"/>
<dbReference type="Proteomes" id="UP000008330">
    <property type="component" value="Chromosome"/>
</dbReference>
<dbReference type="GO" id="GO:0005737">
    <property type="term" value="C:cytoplasm"/>
    <property type="evidence" value="ECO:0007669"/>
    <property type="project" value="UniProtKB-SubCell"/>
</dbReference>
<dbReference type="GO" id="GO:0008254">
    <property type="term" value="F:3'-nucleotidase activity"/>
    <property type="evidence" value="ECO:0007669"/>
    <property type="project" value="TreeGrafter"/>
</dbReference>
<dbReference type="GO" id="GO:0008253">
    <property type="term" value="F:5'-nucleotidase activity"/>
    <property type="evidence" value="ECO:0007669"/>
    <property type="project" value="UniProtKB-UniRule"/>
</dbReference>
<dbReference type="GO" id="GO:0004309">
    <property type="term" value="F:exopolyphosphatase activity"/>
    <property type="evidence" value="ECO:0007669"/>
    <property type="project" value="TreeGrafter"/>
</dbReference>
<dbReference type="GO" id="GO:0046872">
    <property type="term" value="F:metal ion binding"/>
    <property type="evidence" value="ECO:0007669"/>
    <property type="project" value="UniProtKB-UniRule"/>
</dbReference>
<dbReference type="GO" id="GO:0000166">
    <property type="term" value="F:nucleotide binding"/>
    <property type="evidence" value="ECO:0007669"/>
    <property type="project" value="UniProtKB-KW"/>
</dbReference>
<dbReference type="FunFam" id="3.40.1210.10:FF:000001">
    <property type="entry name" value="5'/3'-nucleotidase SurE"/>
    <property type="match status" value="1"/>
</dbReference>
<dbReference type="Gene3D" id="3.40.1210.10">
    <property type="entry name" value="Survival protein SurE-like phosphatase/nucleotidase"/>
    <property type="match status" value="1"/>
</dbReference>
<dbReference type="HAMAP" id="MF_00060">
    <property type="entry name" value="SurE"/>
    <property type="match status" value="1"/>
</dbReference>
<dbReference type="InterPro" id="IPR030048">
    <property type="entry name" value="SurE"/>
</dbReference>
<dbReference type="InterPro" id="IPR002828">
    <property type="entry name" value="SurE-like_Pase/nucleotidase"/>
</dbReference>
<dbReference type="InterPro" id="IPR036523">
    <property type="entry name" value="SurE-like_sf"/>
</dbReference>
<dbReference type="NCBIfam" id="NF001490">
    <property type="entry name" value="PRK00346.1-4"/>
    <property type="match status" value="1"/>
</dbReference>
<dbReference type="NCBIfam" id="TIGR00087">
    <property type="entry name" value="surE"/>
    <property type="match status" value="1"/>
</dbReference>
<dbReference type="PANTHER" id="PTHR30457">
    <property type="entry name" value="5'-NUCLEOTIDASE SURE"/>
    <property type="match status" value="1"/>
</dbReference>
<dbReference type="PANTHER" id="PTHR30457:SF12">
    <property type="entry name" value="5'_3'-NUCLEOTIDASE SURE"/>
    <property type="match status" value="1"/>
</dbReference>
<dbReference type="Pfam" id="PF01975">
    <property type="entry name" value="SurE"/>
    <property type="match status" value="1"/>
</dbReference>
<dbReference type="SUPFAM" id="SSF64167">
    <property type="entry name" value="SurE-like"/>
    <property type="match status" value="1"/>
</dbReference>
<protein>
    <recommendedName>
        <fullName evidence="1">5'-nucleotidase SurE</fullName>
        <ecNumber evidence="1">3.1.3.5</ecNumber>
    </recommendedName>
    <alternativeName>
        <fullName evidence="1">Nucleoside 5'-monophosphate phosphohydrolase</fullName>
    </alternativeName>
</protein>
<accession>B5ZMG1</accession>
<comment type="function">
    <text evidence="1">Nucleotidase that shows phosphatase activity on nucleoside 5'-monophosphates.</text>
</comment>
<comment type="catalytic activity">
    <reaction evidence="1">
        <text>a ribonucleoside 5'-phosphate + H2O = a ribonucleoside + phosphate</text>
        <dbReference type="Rhea" id="RHEA:12484"/>
        <dbReference type="ChEBI" id="CHEBI:15377"/>
        <dbReference type="ChEBI" id="CHEBI:18254"/>
        <dbReference type="ChEBI" id="CHEBI:43474"/>
        <dbReference type="ChEBI" id="CHEBI:58043"/>
        <dbReference type="EC" id="3.1.3.5"/>
    </reaction>
</comment>
<comment type="cofactor">
    <cofactor evidence="1">
        <name>a divalent metal cation</name>
        <dbReference type="ChEBI" id="CHEBI:60240"/>
    </cofactor>
    <text evidence="1">Binds 1 divalent metal cation per subunit.</text>
</comment>
<comment type="subcellular location">
    <subcellularLocation>
        <location evidence="1">Cytoplasm</location>
    </subcellularLocation>
</comment>
<comment type="similarity">
    <text evidence="1">Belongs to the SurE nucleotidase family.</text>
</comment>
<sequence>MRILLTNDDGIHAEGLAALERIARTLSDDVWIVAPETDQSGLAHSLSLSEPLRLRKISDKHFALRGTPTDCVIMGIRQVMDIKPDLVLSGVNSGSNVADDVTYSGTIAGAIEGTMQGVRSFALSQAYLYEDGARIVPWEVCETHAPALLEKLMVLDLPEGTFLNLNFPNCRPGEVDGAEVTMQGKLAFNLQVDARSDGRGFPYYWLKFGERAGAFIEGTDIHALKHNKISVTPLKLDLTDYSVTDRVARALGYGAQV</sequence>
<organism>
    <name type="scientific">Rhizobium leguminosarum bv. trifolii (strain WSM2304)</name>
    <dbReference type="NCBI Taxonomy" id="395492"/>
    <lineage>
        <taxon>Bacteria</taxon>
        <taxon>Pseudomonadati</taxon>
        <taxon>Pseudomonadota</taxon>
        <taxon>Alphaproteobacteria</taxon>
        <taxon>Hyphomicrobiales</taxon>
        <taxon>Rhizobiaceae</taxon>
        <taxon>Rhizobium/Agrobacterium group</taxon>
        <taxon>Rhizobium</taxon>
    </lineage>
</organism>
<reference key="1">
    <citation type="journal article" date="2010" name="Stand. Genomic Sci.">
        <title>Complete genome sequence of Rhizobium leguminosarum bv trifolii strain WSM2304, an effective microsymbiont of the South American clover Trifolium polymorphum.</title>
        <authorList>
            <person name="Reeve W."/>
            <person name="O'Hara G."/>
            <person name="Chain P."/>
            <person name="Ardley J."/>
            <person name="Brau L."/>
            <person name="Nandesena K."/>
            <person name="Tiwari R."/>
            <person name="Malfatti S."/>
            <person name="Kiss H."/>
            <person name="Lapidus A."/>
            <person name="Copeland A."/>
            <person name="Nolan M."/>
            <person name="Land M."/>
            <person name="Ivanova N."/>
            <person name="Mavromatis K."/>
            <person name="Markowitz V."/>
            <person name="Kyrpides N."/>
            <person name="Melino V."/>
            <person name="Denton M."/>
            <person name="Yates R."/>
            <person name="Howieson J."/>
        </authorList>
    </citation>
    <scope>NUCLEOTIDE SEQUENCE [LARGE SCALE GENOMIC DNA]</scope>
    <source>
        <strain>WSM2304</strain>
    </source>
</reference>
<name>SURE_RHILW</name>
<proteinExistence type="inferred from homology"/>
<feature type="chain" id="PRO_1000092030" description="5'-nucleotidase SurE">
    <location>
        <begin position="1"/>
        <end position="257"/>
    </location>
</feature>
<feature type="binding site" evidence="1">
    <location>
        <position position="8"/>
    </location>
    <ligand>
        <name>a divalent metal cation</name>
        <dbReference type="ChEBI" id="CHEBI:60240"/>
    </ligand>
</feature>
<feature type="binding site" evidence="1">
    <location>
        <position position="9"/>
    </location>
    <ligand>
        <name>a divalent metal cation</name>
        <dbReference type="ChEBI" id="CHEBI:60240"/>
    </ligand>
</feature>
<feature type="binding site" evidence="1">
    <location>
        <position position="40"/>
    </location>
    <ligand>
        <name>a divalent metal cation</name>
        <dbReference type="ChEBI" id="CHEBI:60240"/>
    </ligand>
</feature>
<feature type="binding site" evidence="1">
    <location>
        <position position="92"/>
    </location>
    <ligand>
        <name>a divalent metal cation</name>
        <dbReference type="ChEBI" id="CHEBI:60240"/>
    </ligand>
</feature>
<keyword id="KW-0963">Cytoplasm</keyword>
<keyword id="KW-0378">Hydrolase</keyword>
<keyword id="KW-0479">Metal-binding</keyword>
<keyword id="KW-0547">Nucleotide-binding</keyword>
<keyword id="KW-1185">Reference proteome</keyword>
<evidence type="ECO:0000255" key="1">
    <source>
        <dbReference type="HAMAP-Rule" id="MF_00060"/>
    </source>
</evidence>